<dbReference type="EMBL" id="CP000243">
    <property type="protein sequence ID" value="ABE07541.1"/>
    <property type="molecule type" value="Genomic_DNA"/>
</dbReference>
<dbReference type="RefSeq" id="WP_000580323.1">
    <property type="nucleotide sequence ID" value="NZ_CP064825.1"/>
</dbReference>
<dbReference type="SMR" id="Q1RAS3"/>
<dbReference type="GeneID" id="75057740"/>
<dbReference type="KEGG" id="eci:UTI89_C2065"/>
<dbReference type="HOGENOM" id="CLU_087936_0_0_6"/>
<dbReference type="Proteomes" id="UP000001952">
    <property type="component" value="Chromosome"/>
</dbReference>
<dbReference type="GO" id="GO:0005737">
    <property type="term" value="C:cytoplasm"/>
    <property type="evidence" value="ECO:0007669"/>
    <property type="project" value="UniProtKB-SubCell"/>
</dbReference>
<dbReference type="GO" id="GO:0009379">
    <property type="term" value="C:Holliday junction helicase complex"/>
    <property type="evidence" value="ECO:0007669"/>
    <property type="project" value="InterPro"/>
</dbReference>
<dbReference type="GO" id="GO:0048476">
    <property type="term" value="C:Holliday junction resolvase complex"/>
    <property type="evidence" value="ECO:0007669"/>
    <property type="project" value="UniProtKB-UniRule"/>
</dbReference>
<dbReference type="GO" id="GO:0005524">
    <property type="term" value="F:ATP binding"/>
    <property type="evidence" value="ECO:0007669"/>
    <property type="project" value="InterPro"/>
</dbReference>
<dbReference type="GO" id="GO:0000400">
    <property type="term" value="F:four-way junction DNA binding"/>
    <property type="evidence" value="ECO:0007669"/>
    <property type="project" value="UniProtKB-UniRule"/>
</dbReference>
<dbReference type="GO" id="GO:0009378">
    <property type="term" value="F:four-way junction helicase activity"/>
    <property type="evidence" value="ECO:0007669"/>
    <property type="project" value="InterPro"/>
</dbReference>
<dbReference type="GO" id="GO:0006310">
    <property type="term" value="P:DNA recombination"/>
    <property type="evidence" value="ECO:0007669"/>
    <property type="project" value="UniProtKB-UniRule"/>
</dbReference>
<dbReference type="GO" id="GO:0006281">
    <property type="term" value="P:DNA repair"/>
    <property type="evidence" value="ECO:0007669"/>
    <property type="project" value="UniProtKB-UniRule"/>
</dbReference>
<dbReference type="GO" id="GO:0009432">
    <property type="term" value="P:SOS response"/>
    <property type="evidence" value="ECO:0007669"/>
    <property type="project" value="UniProtKB-UniRule"/>
</dbReference>
<dbReference type="CDD" id="cd14332">
    <property type="entry name" value="UBA_RuvA_C"/>
    <property type="match status" value="1"/>
</dbReference>
<dbReference type="FunFam" id="1.10.150.20:FF:000012">
    <property type="entry name" value="Holliday junction ATP-dependent DNA helicase RuvA"/>
    <property type="match status" value="1"/>
</dbReference>
<dbReference type="FunFam" id="1.10.8.10:FF:000008">
    <property type="entry name" value="Holliday junction ATP-dependent DNA helicase RuvA"/>
    <property type="match status" value="1"/>
</dbReference>
<dbReference type="FunFam" id="2.40.50.140:FF:000083">
    <property type="entry name" value="Holliday junction ATP-dependent DNA helicase RuvA"/>
    <property type="match status" value="1"/>
</dbReference>
<dbReference type="Gene3D" id="1.10.150.20">
    <property type="entry name" value="5' to 3' exonuclease, C-terminal subdomain"/>
    <property type="match status" value="1"/>
</dbReference>
<dbReference type="Gene3D" id="1.10.8.10">
    <property type="entry name" value="DNA helicase RuvA subunit, C-terminal domain"/>
    <property type="match status" value="1"/>
</dbReference>
<dbReference type="Gene3D" id="2.40.50.140">
    <property type="entry name" value="Nucleic acid-binding proteins"/>
    <property type="match status" value="1"/>
</dbReference>
<dbReference type="HAMAP" id="MF_00031">
    <property type="entry name" value="DNA_HJ_migration_RuvA"/>
    <property type="match status" value="1"/>
</dbReference>
<dbReference type="InterPro" id="IPR013849">
    <property type="entry name" value="DNA_helicase_Holl-junc_RuvA_I"/>
</dbReference>
<dbReference type="InterPro" id="IPR003583">
    <property type="entry name" value="Hlx-hairpin-Hlx_DNA-bd_motif"/>
</dbReference>
<dbReference type="InterPro" id="IPR012340">
    <property type="entry name" value="NA-bd_OB-fold"/>
</dbReference>
<dbReference type="InterPro" id="IPR000085">
    <property type="entry name" value="RuvA"/>
</dbReference>
<dbReference type="InterPro" id="IPR010994">
    <property type="entry name" value="RuvA_2-like"/>
</dbReference>
<dbReference type="InterPro" id="IPR011114">
    <property type="entry name" value="RuvA_C"/>
</dbReference>
<dbReference type="InterPro" id="IPR036267">
    <property type="entry name" value="RuvA_C_sf"/>
</dbReference>
<dbReference type="NCBIfam" id="TIGR00084">
    <property type="entry name" value="ruvA"/>
    <property type="match status" value="1"/>
</dbReference>
<dbReference type="Pfam" id="PF14520">
    <property type="entry name" value="HHH_5"/>
    <property type="match status" value="1"/>
</dbReference>
<dbReference type="Pfam" id="PF07499">
    <property type="entry name" value="RuvA_C"/>
    <property type="match status" value="1"/>
</dbReference>
<dbReference type="Pfam" id="PF01330">
    <property type="entry name" value="RuvA_N"/>
    <property type="match status" value="1"/>
</dbReference>
<dbReference type="SMART" id="SM00278">
    <property type="entry name" value="HhH1"/>
    <property type="match status" value="2"/>
</dbReference>
<dbReference type="SUPFAM" id="SSF46929">
    <property type="entry name" value="DNA helicase RuvA subunit, C-terminal domain"/>
    <property type="match status" value="1"/>
</dbReference>
<dbReference type="SUPFAM" id="SSF50249">
    <property type="entry name" value="Nucleic acid-binding proteins"/>
    <property type="match status" value="1"/>
</dbReference>
<dbReference type="SUPFAM" id="SSF47781">
    <property type="entry name" value="RuvA domain 2-like"/>
    <property type="match status" value="1"/>
</dbReference>
<organism>
    <name type="scientific">Escherichia coli (strain UTI89 / UPEC)</name>
    <dbReference type="NCBI Taxonomy" id="364106"/>
    <lineage>
        <taxon>Bacteria</taxon>
        <taxon>Pseudomonadati</taxon>
        <taxon>Pseudomonadota</taxon>
        <taxon>Gammaproteobacteria</taxon>
        <taxon>Enterobacterales</taxon>
        <taxon>Enterobacteriaceae</taxon>
        <taxon>Escherichia</taxon>
    </lineage>
</organism>
<name>RUVA_ECOUT</name>
<proteinExistence type="inferred from homology"/>
<feature type="chain" id="PRO_1000002444" description="Holliday junction branch migration complex subunit RuvA">
    <location>
        <begin position="1"/>
        <end position="203"/>
    </location>
</feature>
<feature type="region of interest" description="Domain I" evidence="1">
    <location>
        <begin position="1"/>
        <end position="64"/>
    </location>
</feature>
<feature type="region of interest" description="Domain II" evidence="1">
    <location>
        <begin position="65"/>
        <end position="142"/>
    </location>
</feature>
<feature type="region of interest" description="Flexible linker" evidence="1">
    <location>
        <begin position="143"/>
        <end position="154"/>
    </location>
</feature>
<feature type="region of interest" description="Domain III" evidence="1">
    <location>
        <begin position="155"/>
        <end position="203"/>
    </location>
</feature>
<keyword id="KW-0963">Cytoplasm</keyword>
<keyword id="KW-0227">DNA damage</keyword>
<keyword id="KW-0233">DNA recombination</keyword>
<keyword id="KW-0234">DNA repair</keyword>
<keyword id="KW-0238">DNA-binding</keyword>
<keyword id="KW-0742">SOS response</keyword>
<comment type="function">
    <text evidence="1">The RuvA-RuvB-RuvC complex processes Holliday junction (HJ) DNA during genetic recombination and DNA repair, while the RuvA-RuvB complex plays an important role in the rescue of blocked DNA replication forks via replication fork reversal (RFR). RuvA specifically binds to HJ cruciform DNA, conferring on it an open structure. The RuvB hexamer acts as an ATP-dependent pump, pulling dsDNA into and through the RuvAB complex. HJ branch migration allows RuvC to scan DNA until it finds its consensus sequence, where it cleaves and resolves the cruciform DNA.</text>
</comment>
<comment type="subunit">
    <text evidence="1">Homotetramer. Forms an RuvA(8)-RuvB(12)-Holliday junction (HJ) complex. HJ DNA is sandwiched between 2 RuvA tetramers; dsDNA enters through RuvA and exits via RuvB. An RuvB hexamer assembles on each DNA strand where it exits the tetramer. Each RuvB hexamer is contacted by two RuvA subunits (via domain III) on 2 adjacent RuvB subunits; this complex drives branch migration. In the full resolvosome a probable DNA-RuvA(4)-RuvB(12)-RuvC(2) complex forms which resolves the HJ.</text>
</comment>
<comment type="subcellular location">
    <subcellularLocation>
        <location evidence="1">Cytoplasm</location>
    </subcellularLocation>
</comment>
<comment type="domain">
    <text evidence="1">Has three domains with a flexible linker between the domains II and III and assumes an 'L' shape. Domain III is highly mobile and contacts RuvB.</text>
</comment>
<comment type="similarity">
    <text evidence="1">Belongs to the RuvA family.</text>
</comment>
<evidence type="ECO:0000255" key="1">
    <source>
        <dbReference type="HAMAP-Rule" id="MF_00031"/>
    </source>
</evidence>
<protein>
    <recommendedName>
        <fullName evidence="1">Holliday junction branch migration complex subunit RuvA</fullName>
    </recommendedName>
</protein>
<accession>Q1RAS3</accession>
<sequence>MIGRLRGIIIEKQPPLVLIEVGGVGYEVHMPMTCFYELPEAGQEAIVFTHFVVREDAQLLYGFNNKQERTLFKELIKTNGVGPKLALAILSGMSAQQFVNAVEREEVGALVKLPGIGKKTAERLIVEMKDRFKGLHGDLFTPAADLVLTSPASPATDDAEQEAVAALVALGYKPQEASRMVSKIARPDASSETLIREALRAAL</sequence>
<reference key="1">
    <citation type="journal article" date="2006" name="Proc. Natl. Acad. Sci. U.S.A.">
        <title>Identification of genes subject to positive selection in uropathogenic strains of Escherichia coli: a comparative genomics approach.</title>
        <authorList>
            <person name="Chen S.L."/>
            <person name="Hung C.-S."/>
            <person name="Xu J."/>
            <person name="Reigstad C.S."/>
            <person name="Magrini V."/>
            <person name="Sabo A."/>
            <person name="Blasiar D."/>
            <person name="Bieri T."/>
            <person name="Meyer R.R."/>
            <person name="Ozersky P."/>
            <person name="Armstrong J.R."/>
            <person name="Fulton R.S."/>
            <person name="Latreille J.P."/>
            <person name="Spieth J."/>
            <person name="Hooton T.M."/>
            <person name="Mardis E.R."/>
            <person name="Hultgren S.J."/>
            <person name="Gordon J.I."/>
        </authorList>
    </citation>
    <scope>NUCLEOTIDE SEQUENCE [LARGE SCALE GENOMIC DNA]</scope>
    <source>
        <strain>UTI89 / UPEC</strain>
    </source>
</reference>
<gene>
    <name evidence="1" type="primary">ruvA</name>
    <name type="ordered locus">UTI89_C2065</name>
</gene>